<accession>B5EXU9</accession>
<protein>
    <recommendedName>
        <fullName evidence="1">dCTP deaminase</fullName>
        <ecNumber evidence="1">3.5.4.13</ecNumber>
    </recommendedName>
    <alternativeName>
        <fullName evidence="1">Deoxycytidine triphosphate deaminase</fullName>
    </alternativeName>
</protein>
<reference key="1">
    <citation type="journal article" date="2011" name="J. Bacteriol.">
        <title>Comparative genomics of 28 Salmonella enterica isolates: evidence for CRISPR-mediated adaptive sublineage evolution.</title>
        <authorList>
            <person name="Fricke W.F."/>
            <person name="Mammel M.K."/>
            <person name="McDermott P.F."/>
            <person name="Tartera C."/>
            <person name="White D.G."/>
            <person name="Leclerc J.E."/>
            <person name="Ravel J."/>
            <person name="Cebula T.A."/>
        </authorList>
    </citation>
    <scope>NUCLEOTIDE SEQUENCE [LARGE SCALE GENOMIC DNA]</scope>
    <source>
        <strain>SL483</strain>
    </source>
</reference>
<organism>
    <name type="scientific">Salmonella agona (strain SL483)</name>
    <dbReference type="NCBI Taxonomy" id="454166"/>
    <lineage>
        <taxon>Bacteria</taxon>
        <taxon>Pseudomonadati</taxon>
        <taxon>Pseudomonadota</taxon>
        <taxon>Gammaproteobacteria</taxon>
        <taxon>Enterobacterales</taxon>
        <taxon>Enterobacteriaceae</taxon>
        <taxon>Salmonella</taxon>
    </lineage>
</organism>
<evidence type="ECO:0000255" key="1">
    <source>
        <dbReference type="HAMAP-Rule" id="MF_00146"/>
    </source>
</evidence>
<evidence type="ECO:0000256" key="2">
    <source>
        <dbReference type="SAM" id="MobiDB-lite"/>
    </source>
</evidence>
<sequence length="193" mass="21236">MRLCDRDIEAWLDEGRLSITPRPPVERINGATVDVRLGNKFRTFRGHTAAFIDLSGPKDEVSAALDRVMSDEIVLPDGEAFYLHPGELALAVTFESVTLPPDLVGWLDGRSSLARLGLMVHVTAHRIDPGWSGCIVLEFYNSGKLPLALRPGMLIGALSFEPLSGPAARPYNRRQDAKYRDQQGAVASRIDKD</sequence>
<comment type="function">
    <text evidence="1">Catalyzes the deamination of dCTP to dUTP.</text>
</comment>
<comment type="catalytic activity">
    <reaction evidence="1">
        <text>dCTP + H2O + H(+) = dUTP + NH4(+)</text>
        <dbReference type="Rhea" id="RHEA:22680"/>
        <dbReference type="ChEBI" id="CHEBI:15377"/>
        <dbReference type="ChEBI" id="CHEBI:15378"/>
        <dbReference type="ChEBI" id="CHEBI:28938"/>
        <dbReference type="ChEBI" id="CHEBI:61481"/>
        <dbReference type="ChEBI" id="CHEBI:61555"/>
        <dbReference type="EC" id="3.5.4.13"/>
    </reaction>
</comment>
<comment type="pathway">
    <text evidence="1">Pyrimidine metabolism; dUMP biosynthesis; dUMP from dCTP (dUTP route): step 1/2.</text>
</comment>
<comment type="subunit">
    <text evidence="1">Homotrimer.</text>
</comment>
<comment type="similarity">
    <text evidence="1">Belongs to the dCTP deaminase family.</text>
</comment>
<proteinExistence type="inferred from homology"/>
<feature type="chain" id="PRO_1000096446" description="dCTP deaminase">
    <location>
        <begin position="1"/>
        <end position="193"/>
    </location>
</feature>
<feature type="region of interest" description="Disordered" evidence="2">
    <location>
        <begin position="169"/>
        <end position="193"/>
    </location>
</feature>
<feature type="active site" description="Proton donor/acceptor" evidence="1">
    <location>
        <position position="138"/>
    </location>
</feature>
<feature type="binding site" evidence="1">
    <location>
        <begin position="110"/>
        <end position="115"/>
    </location>
    <ligand>
        <name>dCTP</name>
        <dbReference type="ChEBI" id="CHEBI:61481"/>
    </ligand>
</feature>
<feature type="binding site" evidence="1">
    <location>
        <position position="128"/>
    </location>
    <ligand>
        <name>dCTP</name>
        <dbReference type="ChEBI" id="CHEBI:61481"/>
    </ligand>
</feature>
<feature type="binding site" evidence="1">
    <location>
        <begin position="136"/>
        <end position="138"/>
    </location>
    <ligand>
        <name>dCTP</name>
        <dbReference type="ChEBI" id="CHEBI:61481"/>
    </ligand>
</feature>
<feature type="binding site" evidence="1">
    <location>
        <position position="171"/>
    </location>
    <ligand>
        <name>dCTP</name>
        <dbReference type="ChEBI" id="CHEBI:61481"/>
    </ligand>
</feature>
<feature type="binding site" evidence="1">
    <location>
        <position position="178"/>
    </location>
    <ligand>
        <name>dCTP</name>
        <dbReference type="ChEBI" id="CHEBI:61481"/>
    </ligand>
</feature>
<feature type="binding site" evidence="1">
    <location>
        <position position="182"/>
    </location>
    <ligand>
        <name>dCTP</name>
        <dbReference type="ChEBI" id="CHEBI:61481"/>
    </ligand>
</feature>
<gene>
    <name evidence="1" type="primary">dcd</name>
    <name type="ordered locus">SeAg_B2248</name>
</gene>
<keyword id="KW-0378">Hydrolase</keyword>
<keyword id="KW-0546">Nucleotide metabolism</keyword>
<keyword id="KW-0547">Nucleotide-binding</keyword>
<name>DCD_SALA4</name>
<dbReference type="EC" id="3.5.4.13" evidence="1"/>
<dbReference type="EMBL" id="CP001138">
    <property type="protein sequence ID" value="ACH49367.1"/>
    <property type="molecule type" value="Genomic_DNA"/>
</dbReference>
<dbReference type="RefSeq" id="WP_001234783.1">
    <property type="nucleotide sequence ID" value="NC_011149.1"/>
</dbReference>
<dbReference type="SMR" id="B5EXU9"/>
<dbReference type="KEGG" id="sea:SeAg_B2248"/>
<dbReference type="HOGENOM" id="CLU_087476_2_0_6"/>
<dbReference type="UniPathway" id="UPA00610">
    <property type="reaction ID" value="UER00665"/>
</dbReference>
<dbReference type="Proteomes" id="UP000008819">
    <property type="component" value="Chromosome"/>
</dbReference>
<dbReference type="GO" id="GO:0008829">
    <property type="term" value="F:dCTP deaminase activity"/>
    <property type="evidence" value="ECO:0007669"/>
    <property type="project" value="UniProtKB-UniRule"/>
</dbReference>
<dbReference type="GO" id="GO:0000166">
    <property type="term" value="F:nucleotide binding"/>
    <property type="evidence" value="ECO:0007669"/>
    <property type="project" value="UniProtKB-KW"/>
</dbReference>
<dbReference type="GO" id="GO:0006226">
    <property type="term" value="P:dUMP biosynthetic process"/>
    <property type="evidence" value="ECO:0007669"/>
    <property type="project" value="UniProtKB-UniPathway"/>
</dbReference>
<dbReference type="GO" id="GO:0006229">
    <property type="term" value="P:dUTP biosynthetic process"/>
    <property type="evidence" value="ECO:0007669"/>
    <property type="project" value="UniProtKB-UniRule"/>
</dbReference>
<dbReference type="GO" id="GO:0015949">
    <property type="term" value="P:nucleobase-containing small molecule interconversion"/>
    <property type="evidence" value="ECO:0007669"/>
    <property type="project" value="TreeGrafter"/>
</dbReference>
<dbReference type="CDD" id="cd07557">
    <property type="entry name" value="trimeric_dUTPase"/>
    <property type="match status" value="1"/>
</dbReference>
<dbReference type="FunFam" id="2.70.40.10:FF:000003">
    <property type="entry name" value="dCTP deaminase"/>
    <property type="match status" value="1"/>
</dbReference>
<dbReference type="Gene3D" id="2.70.40.10">
    <property type="match status" value="1"/>
</dbReference>
<dbReference type="HAMAP" id="MF_00146">
    <property type="entry name" value="dCTP_deaminase"/>
    <property type="match status" value="1"/>
</dbReference>
<dbReference type="InterPro" id="IPR011962">
    <property type="entry name" value="dCTP_deaminase"/>
</dbReference>
<dbReference type="InterPro" id="IPR036157">
    <property type="entry name" value="dUTPase-like_sf"/>
</dbReference>
<dbReference type="InterPro" id="IPR033704">
    <property type="entry name" value="dUTPase_trimeric"/>
</dbReference>
<dbReference type="NCBIfam" id="TIGR02274">
    <property type="entry name" value="dCTP_deam"/>
    <property type="match status" value="1"/>
</dbReference>
<dbReference type="PANTHER" id="PTHR42680">
    <property type="entry name" value="DCTP DEAMINASE"/>
    <property type="match status" value="1"/>
</dbReference>
<dbReference type="PANTHER" id="PTHR42680:SF3">
    <property type="entry name" value="DCTP DEAMINASE"/>
    <property type="match status" value="1"/>
</dbReference>
<dbReference type="Pfam" id="PF22769">
    <property type="entry name" value="DCD"/>
    <property type="match status" value="1"/>
</dbReference>
<dbReference type="SUPFAM" id="SSF51283">
    <property type="entry name" value="dUTPase-like"/>
    <property type="match status" value="1"/>
</dbReference>